<accession>Q97R20</accession>
<feature type="chain" id="PRO_0000177752" description="Peptide chain release factor 1">
    <location>
        <begin position="1"/>
        <end position="359"/>
    </location>
</feature>
<feature type="modified residue" description="N5-methylglutamine" evidence="1">
    <location>
        <position position="236"/>
    </location>
</feature>
<proteinExistence type="inferred from homology"/>
<keyword id="KW-0963">Cytoplasm</keyword>
<keyword id="KW-0488">Methylation</keyword>
<keyword id="KW-0648">Protein biosynthesis</keyword>
<keyword id="KW-1185">Reference proteome</keyword>
<gene>
    <name evidence="1" type="primary">prfA</name>
    <name type="ordered locus">SP_1020</name>
</gene>
<evidence type="ECO:0000255" key="1">
    <source>
        <dbReference type="HAMAP-Rule" id="MF_00093"/>
    </source>
</evidence>
<dbReference type="EMBL" id="AE005672">
    <property type="protein sequence ID" value="AAK75135.1"/>
    <property type="molecule type" value="Genomic_DNA"/>
</dbReference>
<dbReference type="PIR" id="F95117">
    <property type="entry name" value="F95117"/>
</dbReference>
<dbReference type="RefSeq" id="WP_001028831.1">
    <property type="nucleotide sequence ID" value="NZ_CP155539.1"/>
</dbReference>
<dbReference type="SMR" id="Q97R20"/>
<dbReference type="PaxDb" id="170187-SP_1020"/>
<dbReference type="EnsemblBacteria" id="AAK75135">
    <property type="protein sequence ID" value="AAK75135"/>
    <property type="gene ID" value="SP_1020"/>
</dbReference>
<dbReference type="KEGG" id="spn:SP_1020"/>
<dbReference type="eggNOG" id="COG0216">
    <property type="taxonomic scope" value="Bacteria"/>
</dbReference>
<dbReference type="PhylomeDB" id="Q97R20"/>
<dbReference type="BioCyc" id="SPNE170187:G1FZB-1050-MONOMER"/>
<dbReference type="Proteomes" id="UP000000585">
    <property type="component" value="Chromosome"/>
</dbReference>
<dbReference type="GO" id="GO:0005737">
    <property type="term" value="C:cytoplasm"/>
    <property type="evidence" value="ECO:0007669"/>
    <property type="project" value="UniProtKB-SubCell"/>
</dbReference>
<dbReference type="GO" id="GO:0016149">
    <property type="term" value="F:translation release factor activity, codon specific"/>
    <property type="evidence" value="ECO:0007669"/>
    <property type="project" value="UniProtKB-UniRule"/>
</dbReference>
<dbReference type="FunFam" id="3.30.160.20:FF:000027">
    <property type="entry name" value="Peptide chain release factor 1"/>
    <property type="match status" value="1"/>
</dbReference>
<dbReference type="FunFam" id="3.30.70.1660:FF:000002">
    <property type="entry name" value="Peptide chain release factor 1"/>
    <property type="match status" value="1"/>
</dbReference>
<dbReference type="FunFam" id="3.30.70.1660:FF:000004">
    <property type="entry name" value="Peptide chain release factor 1"/>
    <property type="match status" value="1"/>
</dbReference>
<dbReference type="Gene3D" id="3.30.160.20">
    <property type="match status" value="1"/>
</dbReference>
<dbReference type="Gene3D" id="3.30.70.1660">
    <property type="match status" value="2"/>
</dbReference>
<dbReference type="Gene3D" id="6.10.140.1950">
    <property type="match status" value="1"/>
</dbReference>
<dbReference type="HAMAP" id="MF_00093">
    <property type="entry name" value="Rel_fac_1"/>
    <property type="match status" value="1"/>
</dbReference>
<dbReference type="InterPro" id="IPR005139">
    <property type="entry name" value="PCRF"/>
</dbReference>
<dbReference type="InterPro" id="IPR000352">
    <property type="entry name" value="Pep_chain_release_fac_I"/>
</dbReference>
<dbReference type="InterPro" id="IPR045853">
    <property type="entry name" value="Pep_chain_release_fac_I_sf"/>
</dbReference>
<dbReference type="InterPro" id="IPR050057">
    <property type="entry name" value="Prokaryotic/Mito_RF"/>
</dbReference>
<dbReference type="InterPro" id="IPR004373">
    <property type="entry name" value="RF-1"/>
</dbReference>
<dbReference type="NCBIfam" id="TIGR00019">
    <property type="entry name" value="prfA"/>
    <property type="match status" value="1"/>
</dbReference>
<dbReference type="NCBIfam" id="NF001859">
    <property type="entry name" value="PRK00591.1"/>
    <property type="match status" value="1"/>
</dbReference>
<dbReference type="PANTHER" id="PTHR43804">
    <property type="entry name" value="LD18447P"/>
    <property type="match status" value="1"/>
</dbReference>
<dbReference type="PANTHER" id="PTHR43804:SF7">
    <property type="entry name" value="LD18447P"/>
    <property type="match status" value="1"/>
</dbReference>
<dbReference type="Pfam" id="PF03462">
    <property type="entry name" value="PCRF"/>
    <property type="match status" value="1"/>
</dbReference>
<dbReference type="Pfam" id="PF00472">
    <property type="entry name" value="RF-1"/>
    <property type="match status" value="1"/>
</dbReference>
<dbReference type="SMART" id="SM00937">
    <property type="entry name" value="PCRF"/>
    <property type="match status" value="1"/>
</dbReference>
<dbReference type="SUPFAM" id="SSF75620">
    <property type="entry name" value="Release factor"/>
    <property type="match status" value="1"/>
</dbReference>
<dbReference type="PROSITE" id="PS00745">
    <property type="entry name" value="RF_PROK_I"/>
    <property type="match status" value="1"/>
</dbReference>
<comment type="function">
    <text evidence="1">Peptide chain release factor 1 directs the termination of translation in response to the peptide chain termination codons UAG and UAA.</text>
</comment>
<comment type="subcellular location">
    <subcellularLocation>
        <location evidence="1">Cytoplasm</location>
    </subcellularLocation>
</comment>
<comment type="PTM">
    <text evidence="1">Methylated by PrmC. Methylation increases the termination efficiency of RF1.</text>
</comment>
<comment type="similarity">
    <text evidence="1">Belongs to the prokaryotic/mitochondrial release factor family.</text>
</comment>
<name>RF1_STRPN</name>
<protein>
    <recommendedName>
        <fullName evidence="1">Peptide chain release factor 1</fullName>
        <shortName evidence="1">RF-1</shortName>
    </recommendedName>
</protein>
<organism>
    <name type="scientific">Streptococcus pneumoniae serotype 4 (strain ATCC BAA-334 / TIGR4)</name>
    <dbReference type="NCBI Taxonomy" id="170187"/>
    <lineage>
        <taxon>Bacteria</taxon>
        <taxon>Bacillati</taxon>
        <taxon>Bacillota</taxon>
        <taxon>Bacilli</taxon>
        <taxon>Lactobacillales</taxon>
        <taxon>Streptococcaceae</taxon>
        <taxon>Streptococcus</taxon>
    </lineage>
</organism>
<sequence length="359" mass="40640">MNIYDQLQVVEDRYEELGELLSDPDVVSDTKRFMELSKEEASNRDTVIAYREYKQVLQNIVDAEEMIKESGGDADLEELAKQELKDAKAEKEEYEEKLKILLLPKDPNDDKNIILEIRGAAGGDEAALFAGDLLTMYQKYAEAQGWRFEVMEASMNGVGGFKEVVAMVSGQSVYSKLKYESGAHRVQRVPVTESQGRVHTSTATVLVMPEVEEVEYDIDPKDLRVDIYHASGAGGQNVNKVATAVRIVHLPTNIKVEMQEERTQQKNREKAMKIIRARVADHFAQIAQDEQDAERKSTIGTGDRSERIRTYNFPQNRVTDHRIGLTLQKLDTILSGKLDEVVDALVLYDQTQKLEELNK</sequence>
<reference key="1">
    <citation type="journal article" date="2001" name="Science">
        <title>Complete genome sequence of a virulent isolate of Streptococcus pneumoniae.</title>
        <authorList>
            <person name="Tettelin H."/>
            <person name="Nelson K.E."/>
            <person name="Paulsen I.T."/>
            <person name="Eisen J.A."/>
            <person name="Read T.D."/>
            <person name="Peterson S.N."/>
            <person name="Heidelberg J.F."/>
            <person name="DeBoy R.T."/>
            <person name="Haft D.H."/>
            <person name="Dodson R.J."/>
            <person name="Durkin A.S."/>
            <person name="Gwinn M.L."/>
            <person name="Kolonay J.F."/>
            <person name="Nelson W.C."/>
            <person name="Peterson J.D."/>
            <person name="Umayam L.A."/>
            <person name="White O."/>
            <person name="Salzberg S.L."/>
            <person name="Lewis M.R."/>
            <person name="Radune D."/>
            <person name="Holtzapple E.K."/>
            <person name="Khouri H.M."/>
            <person name="Wolf A.M."/>
            <person name="Utterback T.R."/>
            <person name="Hansen C.L."/>
            <person name="McDonald L.A."/>
            <person name="Feldblyum T.V."/>
            <person name="Angiuoli S.V."/>
            <person name="Dickinson T."/>
            <person name="Hickey E.K."/>
            <person name="Holt I.E."/>
            <person name="Loftus B.J."/>
            <person name="Yang F."/>
            <person name="Smith H.O."/>
            <person name="Venter J.C."/>
            <person name="Dougherty B.A."/>
            <person name="Morrison D.A."/>
            <person name="Hollingshead S.K."/>
            <person name="Fraser C.M."/>
        </authorList>
    </citation>
    <scope>NUCLEOTIDE SEQUENCE [LARGE SCALE GENOMIC DNA]</scope>
    <source>
        <strain>ATCC BAA-334 / TIGR4</strain>
    </source>
</reference>